<name>TXE01_LYCSI</name>
<protein>
    <recommendedName>
        <fullName>U14-lycotoxin-Ls1a</fullName>
    </recommendedName>
    <alternativeName>
        <fullName>Toxin-like structure LSTX-N1</fullName>
    </alternativeName>
</protein>
<sequence length="87" mass="9609">MNSKVFAVLLLLALSTCVLSEKYCPTPRNTSCKKMNIRNNCCRDSDCTSNAFCCAEPCGNFCHKASDKPGGRRVDPNASCQTGYVYW</sequence>
<reference key="1">
    <citation type="journal article" date="2010" name="Zoology">
        <title>Transcriptome analysis of the venom glands of the Chinese wolf spider Lycosa singoriensis.</title>
        <authorList>
            <person name="Zhang Y."/>
            <person name="Chen J."/>
            <person name="Tang X."/>
            <person name="Wang F."/>
            <person name="Jiang L."/>
            <person name="Xiong X."/>
            <person name="Wang M."/>
            <person name="Rong M."/>
            <person name="Liu Z."/>
            <person name="Liang S."/>
        </authorList>
    </citation>
    <scope>NUCLEOTIDE SEQUENCE [LARGE SCALE MRNA]</scope>
    <source>
        <tissue>Venom gland</tissue>
    </source>
</reference>
<proteinExistence type="evidence at transcript level"/>
<accession>B6DD34</accession>
<comment type="function">
    <text evidence="1">Has antibacterial activity.</text>
</comment>
<comment type="subcellular location">
    <subcellularLocation>
        <location evidence="1">Secreted</location>
    </subcellularLocation>
</comment>
<comment type="tissue specificity">
    <text>Expressed by the venom gland.</text>
</comment>
<comment type="PTM">
    <text evidence="3">Contains 5 disulfide bonds.</text>
</comment>
<comment type="similarity">
    <text evidence="3">Belongs to the venom protein 11 family. 01 (wap-1) subfamily.</text>
</comment>
<keyword id="KW-0044">Antibiotic</keyword>
<keyword id="KW-0929">Antimicrobial</keyword>
<keyword id="KW-1015">Disulfide bond</keyword>
<keyword id="KW-0964">Secreted</keyword>
<keyword id="KW-0732">Signal</keyword>
<keyword id="KW-0800">Toxin</keyword>
<dbReference type="EMBL" id="EU926118">
    <property type="protein sequence ID" value="ACI41450.1"/>
    <property type="molecule type" value="mRNA"/>
</dbReference>
<dbReference type="EMBL" id="FM864122">
    <property type="protein sequence ID" value="CAS03719.1"/>
    <property type="molecule type" value="mRNA"/>
</dbReference>
<dbReference type="SMR" id="B6DD34"/>
<dbReference type="ArachnoServer" id="AS001057">
    <property type="toxin name" value="U14-lycotoxin-Ls1a"/>
</dbReference>
<dbReference type="GO" id="GO:0005576">
    <property type="term" value="C:extracellular region"/>
    <property type="evidence" value="ECO:0007669"/>
    <property type="project" value="UniProtKB-SubCell"/>
</dbReference>
<dbReference type="GO" id="GO:0090729">
    <property type="term" value="F:toxin activity"/>
    <property type="evidence" value="ECO:0007669"/>
    <property type="project" value="UniProtKB-KW"/>
</dbReference>
<dbReference type="GO" id="GO:0042742">
    <property type="term" value="P:defense response to bacterium"/>
    <property type="evidence" value="ECO:0007669"/>
    <property type="project" value="UniProtKB-KW"/>
</dbReference>
<dbReference type="InterPro" id="IPR036645">
    <property type="entry name" value="Elafin-like_sf"/>
</dbReference>
<dbReference type="SUPFAM" id="SSF57256">
    <property type="entry name" value="Elafin-like"/>
    <property type="match status" value="1"/>
</dbReference>
<feature type="signal peptide" evidence="2">
    <location>
        <begin position="1"/>
        <end position="20"/>
    </location>
</feature>
<feature type="chain" id="PRO_0000401877" description="U14-lycotoxin-Ls1a">
    <location>
        <begin position="21"/>
        <end position="87"/>
    </location>
</feature>
<feature type="domain" description="WAP">
    <location>
        <begin position="21"/>
        <end position="66"/>
    </location>
</feature>
<feature type="disulfide bond" evidence="1">
    <location>
        <begin position="24"/>
        <end position="54"/>
    </location>
</feature>
<feature type="disulfide bond" evidence="1">
    <location>
        <begin position="32"/>
        <end position="58"/>
    </location>
</feature>
<feature type="disulfide bond" evidence="1">
    <location>
        <begin position="41"/>
        <end position="53"/>
    </location>
</feature>
<feature type="disulfide bond" evidence="3">
    <location>
        <begin position="42"/>
        <end position="80"/>
    </location>
</feature>
<feature type="disulfide bond" evidence="1">
    <location>
        <begin position="47"/>
        <end position="62"/>
    </location>
</feature>
<organism>
    <name type="scientific">Lycosa singoriensis</name>
    <name type="common">Wolf spider</name>
    <name type="synonym">Aranea singoriensis</name>
    <dbReference type="NCBI Taxonomy" id="434756"/>
    <lineage>
        <taxon>Eukaryota</taxon>
        <taxon>Metazoa</taxon>
        <taxon>Ecdysozoa</taxon>
        <taxon>Arthropoda</taxon>
        <taxon>Chelicerata</taxon>
        <taxon>Arachnida</taxon>
        <taxon>Araneae</taxon>
        <taxon>Araneomorphae</taxon>
        <taxon>Entelegynae</taxon>
        <taxon>Lycosoidea</taxon>
        <taxon>Lycosidae</taxon>
        <taxon>Lycosa</taxon>
    </lineage>
</organism>
<evidence type="ECO:0000250" key="1"/>
<evidence type="ECO:0000255" key="2"/>
<evidence type="ECO:0000305" key="3"/>